<dbReference type="EMBL" id="AB169921">
    <property type="protein sequence ID" value="BAE02002.1"/>
    <property type="molecule type" value="mRNA"/>
</dbReference>
<dbReference type="RefSeq" id="NP_001306384.1">
    <property type="nucleotide sequence ID" value="NM_001319455.1"/>
</dbReference>
<dbReference type="SMR" id="Q4R4H3"/>
<dbReference type="STRING" id="9541.ENSMFAP00000017774"/>
<dbReference type="GlyCosmos" id="Q4R4H3">
    <property type="glycosylation" value="3 sites, No reported glycans"/>
</dbReference>
<dbReference type="eggNOG" id="ENOG502QSAR">
    <property type="taxonomic scope" value="Eukaryota"/>
</dbReference>
<dbReference type="Proteomes" id="UP000233100">
    <property type="component" value="Unplaced"/>
</dbReference>
<dbReference type="GO" id="GO:0005576">
    <property type="term" value="C:extracellular region"/>
    <property type="evidence" value="ECO:0007669"/>
    <property type="project" value="UniProtKB-SubCell"/>
</dbReference>
<dbReference type="GO" id="GO:0043005">
    <property type="term" value="C:neuron projection"/>
    <property type="evidence" value="ECO:0007669"/>
    <property type="project" value="UniProtKB-KW"/>
</dbReference>
<dbReference type="GO" id="GO:0008021">
    <property type="term" value="C:synaptic vesicle"/>
    <property type="evidence" value="ECO:0007669"/>
    <property type="project" value="UniProtKB-SubCell"/>
</dbReference>
<dbReference type="GO" id="GO:0006887">
    <property type="term" value="P:exocytosis"/>
    <property type="evidence" value="ECO:0007669"/>
    <property type="project" value="UniProtKB-KW"/>
</dbReference>
<dbReference type="GO" id="GO:0017157">
    <property type="term" value="P:regulation of exocytosis"/>
    <property type="evidence" value="ECO:0007669"/>
    <property type="project" value="TreeGrafter"/>
</dbReference>
<dbReference type="FunFam" id="3.80.10.10:FF:000017">
    <property type="entry name" value="leucine-rich repeat LGI family member 3"/>
    <property type="match status" value="1"/>
</dbReference>
<dbReference type="Gene3D" id="3.80.10.10">
    <property type="entry name" value="Ribonuclease Inhibitor"/>
    <property type="match status" value="2"/>
</dbReference>
<dbReference type="InterPro" id="IPR000483">
    <property type="entry name" value="Cys-rich_flank_reg_C"/>
</dbReference>
<dbReference type="InterPro" id="IPR009039">
    <property type="entry name" value="EAR"/>
</dbReference>
<dbReference type="InterPro" id="IPR005492">
    <property type="entry name" value="EPTP"/>
</dbReference>
<dbReference type="InterPro" id="IPR001611">
    <property type="entry name" value="Leu-rich_rpt"/>
</dbReference>
<dbReference type="InterPro" id="IPR003591">
    <property type="entry name" value="Leu-rich_rpt_typical-subtyp"/>
</dbReference>
<dbReference type="InterPro" id="IPR051295">
    <property type="entry name" value="LGI_related"/>
</dbReference>
<dbReference type="InterPro" id="IPR032675">
    <property type="entry name" value="LRR_dom_sf"/>
</dbReference>
<dbReference type="InterPro" id="IPR011041">
    <property type="entry name" value="Quinoprot_gluc/sorb_DH_b-prop"/>
</dbReference>
<dbReference type="PANTHER" id="PTHR24367:SF10">
    <property type="entry name" value="LEUCINE-RICH REPEAT LGI FAMILY MEMBER 3"/>
    <property type="match status" value="1"/>
</dbReference>
<dbReference type="PANTHER" id="PTHR24367">
    <property type="entry name" value="LEUCINE-RICH REPEAT-CONTAINING PROTEIN"/>
    <property type="match status" value="1"/>
</dbReference>
<dbReference type="Pfam" id="PF03736">
    <property type="entry name" value="EPTP"/>
    <property type="match status" value="7"/>
</dbReference>
<dbReference type="Pfam" id="PF13855">
    <property type="entry name" value="LRR_8"/>
    <property type="match status" value="1"/>
</dbReference>
<dbReference type="SMART" id="SM00369">
    <property type="entry name" value="LRR_TYP"/>
    <property type="match status" value="3"/>
</dbReference>
<dbReference type="SMART" id="SM00082">
    <property type="entry name" value="LRRCT"/>
    <property type="match status" value="1"/>
</dbReference>
<dbReference type="SUPFAM" id="SSF52058">
    <property type="entry name" value="L domain-like"/>
    <property type="match status" value="1"/>
</dbReference>
<dbReference type="SUPFAM" id="SSF50952">
    <property type="entry name" value="Soluble quinoprotein glucose dehydrogenase"/>
    <property type="match status" value="1"/>
</dbReference>
<dbReference type="PROSITE" id="PS50912">
    <property type="entry name" value="EAR"/>
    <property type="match status" value="7"/>
</dbReference>
<dbReference type="PROSITE" id="PS51450">
    <property type="entry name" value="LRR"/>
    <property type="match status" value="4"/>
</dbReference>
<proteinExistence type="evidence at transcript level"/>
<evidence type="ECO:0000250" key="1"/>
<evidence type="ECO:0000255" key="2"/>
<evidence type="ECO:0000255" key="3">
    <source>
        <dbReference type="PROSITE-ProRule" id="PRU00075"/>
    </source>
</evidence>
<evidence type="ECO:0000305" key="4"/>
<protein>
    <recommendedName>
        <fullName>Leucine-rich repeat LGI family member 3</fullName>
    </recommendedName>
    <alternativeName>
        <fullName>Leucine-rich glioma-inactivated protein 3</fullName>
    </alternativeName>
</protein>
<name>LGI3_MACFA</name>
<gene>
    <name type="primary">LGI3</name>
    <name type="ORF">QccE-10939</name>
</gene>
<comment type="function">
    <text evidence="1">May participate in the regulation of neuronal exocytosis.</text>
</comment>
<comment type="subunit">
    <text evidence="1">Interacts with STX1A.</text>
</comment>
<comment type="subcellular location">
    <subcellularLocation>
        <location evidence="4">Secreted</location>
    </subcellularLocation>
    <subcellularLocation>
        <location evidence="1">Cytoplasmic vesicle</location>
        <location evidence="1">Secretory vesicle</location>
        <location evidence="1">Synaptic vesicle</location>
    </subcellularLocation>
    <subcellularLocation>
        <location evidence="1">Synapse</location>
        <location evidence="1">Synaptosome</location>
    </subcellularLocation>
    <text evidence="1">Found in the synaptosomal membrane fraction.</text>
</comment>
<sequence>MAGLRARRGPAPGLLALSALGFCLMLQVSAKRLPKTPPCPPSCSCTRDTAFCVDSKAVPRNLPSEVISLTLVNAAFSEIHDGAFSHLPLLQFLLLNSNKFTLIGDNAFTGLSHLQYLFIENNDIWTLSKFTFRGLKSLTHLSLANNNLQTLPRDIFRPLDILNDLDLRGNSLNCDCKVKWLVEWLAHTNTTVAPIYCASPPRFQEHKVQDLPLREFDCITTDFVLYQTLSFPAVSAEPFLYSSDLYLALAQPGVSACTILKWDYVERQLRDYDRIPAPSAVHCKPMVVDSQLYVVVAQLFGGSYIYHWDPNTTRFTKLQDIDPQRVRKPNDLEAFRIDGDWYFAVADSSKAGATSLYRWHQNGFYSHQALHPWHRDTDLEFVDGEGKPRLIVSNSSQAPVIYQWSRTQKQFVAQGEVTQVPDAQAVKHFRAGRDSYLCLSRYIGDSKILRWEGTRFSEVQALPSRGSLALQPFLVGGRRYLALGSDFSFTQIYQWDEGRQKFVRFQELAVQAPRAFCYMPAGDAQLLLAPSFKGQTLVYRHVVVDLSA</sequence>
<organism>
    <name type="scientific">Macaca fascicularis</name>
    <name type="common">Crab-eating macaque</name>
    <name type="synonym">Cynomolgus monkey</name>
    <dbReference type="NCBI Taxonomy" id="9541"/>
    <lineage>
        <taxon>Eukaryota</taxon>
        <taxon>Metazoa</taxon>
        <taxon>Chordata</taxon>
        <taxon>Craniata</taxon>
        <taxon>Vertebrata</taxon>
        <taxon>Euteleostomi</taxon>
        <taxon>Mammalia</taxon>
        <taxon>Eutheria</taxon>
        <taxon>Euarchontoglires</taxon>
        <taxon>Primates</taxon>
        <taxon>Haplorrhini</taxon>
        <taxon>Catarrhini</taxon>
        <taxon>Cercopithecidae</taxon>
        <taxon>Cercopithecinae</taxon>
        <taxon>Macaca</taxon>
    </lineage>
</organism>
<keyword id="KW-0968">Cytoplasmic vesicle</keyword>
<keyword id="KW-0268">Exocytosis</keyword>
<keyword id="KW-0325">Glycoprotein</keyword>
<keyword id="KW-0433">Leucine-rich repeat</keyword>
<keyword id="KW-1185">Reference proteome</keyword>
<keyword id="KW-0677">Repeat</keyword>
<keyword id="KW-0964">Secreted</keyword>
<keyword id="KW-0732">Signal</keyword>
<keyword id="KW-0770">Synapse</keyword>
<keyword id="KW-0771">Synaptosome</keyword>
<feature type="signal peptide" evidence="2">
    <location>
        <begin position="1"/>
        <end position="30"/>
    </location>
</feature>
<feature type="chain" id="PRO_0000251158" description="Leucine-rich repeat LGI family member 3">
    <location>
        <begin position="31"/>
        <end position="548"/>
    </location>
</feature>
<feature type="domain" description="LRRNT">
    <location>
        <begin position="31"/>
        <end position="64"/>
    </location>
</feature>
<feature type="repeat" description="LRR 1">
    <location>
        <begin position="89"/>
        <end position="110"/>
    </location>
</feature>
<feature type="repeat" description="LRR 2">
    <location>
        <begin position="113"/>
        <end position="134"/>
    </location>
</feature>
<feature type="repeat" description="LRR 3">
    <location>
        <begin position="137"/>
        <end position="158"/>
    </location>
</feature>
<feature type="domain" description="LRRCT">
    <location>
        <begin position="170"/>
        <end position="220"/>
    </location>
</feature>
<feature type="repeat" description="EAR 1" evidence="3">
    <location>
        <begin position="222"/>
        <end position="264"/>
    </location>
</feature>
<feature type="repeat" description="EAR 2" evidence="3">
    <location>
        <begin position="268"/>
        <end position="310"/>
    </location>
</feature>
<feature type="repeat" description="EAR 3" evidence="3">
    <location>
        <begin position="314"/>
        <end position="361"/>
    </location>
</feature>
<feature type="repeat" description="EAR 4" evidence="3">
    <location>
        <begin position="363"/>
        <end position="406"/>
    </location>
</feature>
<feature type="repeat" description="EAR 5" evidence="3">
    <location>
        <begin position="410"/>
        <end position="453"/>
    </location>
</feature>
<feature type="repeat" description="EAR 6" evidence="3">
    <location>
        <begin position="455"/>
        <end position="497"/>
    </location>
</feature>
<feature type="repeat" description="EAR 7" evidence="3">
    <location>
        <begin position="501"/>
        <end position="543"/>
    </location>
</feature>
<feature type="glycosylation site" description="N-linked (GlcNAc...) asparagine" evidence="2">
    <location>
        <position position="189"/>
    </location>
</feature>
<feature type="glycosylation site" description="N-linked (GlcNAc...) asparagine" evidence="2">
    <location>
        <position position="311"/>
    </location>
</feature>
<feature type="glycosylation site" description="N-linked (GlcNAc...) asparagine" evidence="2">
    <location>
        <position position="394"/>
    </location>
</feature>
<accession>Q4R4H3</accession>
<reference key="1">
    <citation type="submission" date="2005-06" db="EMBL/GenBank/DDBJ databases">
        <title>DNA sequences of macaque genes expressed in brain or testis and its evolutionary implications.</title>
        <authorList>
            <consortium name="International consortium for macaque cDNA sequencing and analysis"/>
        </authorList>
    </citation>
    <scope>NUCLEOTIDE SEQUENCE [LARGE SCALE MRNA]</scope>
    <source>
        <tissue>Brain cortex</tissue>
    </source>
</reference>